<organism>
    <name type="scientific">Paraburkholderia xenovorans (strain LB400)</name>
    <dbReference type="NCBI Taxonomy" id="266265"/>
    <lineage>
        <taxon>Bacteria</taxon>
        <taxon>Pseudomonadati</taxon>
        <taxon>Pseudomonadota</taxon>
        <taxon>Betaproteobacteria</taxon>
        <taxon>Burkholderiales</taxon>
        <taxon>Burkholderiaceae</taxon>
        <taxon>Paraburkholderia</taxon>
    </lineage>
</organism>
<comment type="function">
    <text evidence="1">Catalyzes the NAD-dependent reduction of succinylglutamate semialdehyde into succinylglutamate.</text>
</comment>
<comment type="catalytic activity">
    <reaction evidence="1">
        <text>N-succinyl-L-glutamate 5-semialdehyde + NAD(+) + H2O = N-succinyl-L-glutamate + NADH + 2 H(+)</text>
        <dbReference type="Rhea" id="RHEA:10812"/>
        <dbReference type="ChEBI" id="CHEBI:15377"/>
        <dbReference type="ChEBI" id="CHEBI:15378"/>
        <dbReference type="ChEBI" id="CHEBI:57540"/>
        <dbReference type="ChEBI" id="CHEBI:57945"/>
        <dbReference type="ChEBI" id="CHEBI:58520"/>
        <dbReference type="ChEBI" id="CHEBI:58763"/>
        <dbReference type="EC" id="1.2.1.71"/>
    </reaction>
</comment>
<comment type="pathway">
    <text evidence="1">Amino-acid degradation; L-arginine degradation via AST pathway; L-glutamate and succinate from L-arginine: step 4/5.</text>
</comment>
<comment type="similarity">
    <text evidence="1">Belongs to the aldehyde dehydrogenase family. AstD subfamily.</text>
</comment>
<comment type="sequence caution" evidence="2">
    <conflict type="erroneous initiation">
        <sequence resource="EMBL-CDS" id="ABE30056"/>
    </conflict>
</comment>
<proteinExistence type="inferred from homology"/>
<name>ASTD_PARXL</name>
<accession>Q141D3</accession>
<gene>
    <name evidence="1" type="primary">astD</name>
    <name type="ordered locus">Bxeno_A1518</name>
    <name type="ORF">Bxe_A2920</name>
</gene>
<keyword id="KW-0056">Arginine metabolism</keyword>
<keyword id="KW-0520">NAD</keyword>
<keyword id="KW-0560">Oxidoreductase</keyword>
<keyword id="KW-1185">Reference proteome</keyword>
<dbReference type="EC" id="1.2.1.71" evidence="1"/>
<dbReference type="EMBL" id="CP000270">
    <property type="protein sequence ID" value="ABE30056.1"/>
    <property type="status" value="ALT_INIT"/>
    <property type="molecule type" value="Genomic_DNA"/>
</dbReference>
<dbReference type="RefSeq" id="WP_038456493.1">
    <property type="nucleotide sequence ID" value="NC_007951.1"/>
</dbReference>
<dbReference type="SMR" id="Q141D3"/>
<dbReference type="STRING" id="266265.Bxe_A2920"/>
<dbReference type="KEGG" id="bxb:DR64_602"/>
<dbReference type="KEGG" id="bxe:Bxe_A2920"/>
<dbReference type="PATRIC" id="fig|266265.5.peg.1569"/>
<dbReference type="eggNOG" id="COG1012">
    <property type="taxonomic scope" value="Bacteria"/>
</dbReference>
<dbReference type="OrthoDB" id="6187633at2"/>
<dbReference type="UniPathway" id="UPA00185">
    <property type="reaction ID" value="UER00282"/>
</dbReference>
<dbReference type="Proteomes" id="UP000001817">
    <property type="component" value="Chromosome 1"/>
</dbReference>
<dbReference type="GO" id="GO:0043824">
    <property type="term" value="F:succinylglutamate-semialdehyde dehydrogenase activity"/>
    <property type="evidence" value="ECO:0007669"/>
    <property type="project" value="UniProtKB-EC"/>
</dbReference>
<dbReference type="GO" id="GO:0019544">
    <property type="term" value="P:arginine catabolic process to glutamate"/>
    <property type="evidence" value="ECO:0007669"/>
    <property type="project" value="UniProtKB-UniRule"/>
</dbReference>
<dbReference type="GO" id="GO:0019545">
    <property type="term" value="P:arginine catabolic process to succinate"/>
    <property type="evidence" value="ECO:0007669"/>
    <property type="project" value="UniProtKB-UniRule"/>
</dbReference>
<dbReference type="CDD" id="cd07095">
    <property type="entry name" value="ALDH_SGSD_AstD"/>
    <property type="match status" value="1"/>
</dbReference>
<dbReference type="FunFam" id="3.40.605.10:FF:000010">
    <property type="entry name" value="N-succinylglutamate 5-semialdehyde dehydrogenase"/>
    <property type="match status" value="1"/>
</dbReference>
<dbReference type="Gene3D" id="3.40.605.10">
    <property type="entry name" value="Aldehyde Dehydrogenase, Chain A, domain 1"/>
    <property type="match status" value="1"/>
</dbReference>
<dbReference type="Gene3D" id="3.40.309.10">
    <property type="entry name" value="Aldehyde Dehydrogenase, Chain A, domain 2"/>
    <property type="match status" value="1"/>
</dbReference>
<dbReference type="HAMAP" id="MF_01174">
    <property type="entry name" value="Aldedh_AstD"/>
    <property type="match status" value="1"/>
</dbReference>
<dbReference type="InterPro" id="IPR016161">
    <property type="entry name" value="Ald_DH/histidinol_DH"/>
</dbReference>
<dbReference type="InterPro" id="IPR016163">
    <property type="entry name" value="Ald_DH_C"/>
</dbReference>
<dbReference type="InterPro" id="IPR016160">
    <property type="entry name" value="Ald_DH_CS_CYS"/>
</dbReference>
<dbReference type="InterPro" id="IPR029510">
    <property type="entry name" value="Ald_DH_CS_GLU"/>
</dbReference>
<dbReference type="InterPro" id="IPR016162">
    <property type="entry name" value="Ald_DH_N"/>
</dbReference>
<dbReference type="InterPro" id="IPR015590">
    <property type="entry name" value="Aldehyde_DH_dom"/>
</dbReference>
<dbReference type="InterPro" id="IPR017649">
    <property type="entry name" value="SuccinylGlu_semiald_DH_AstD"/>
</dbReference>
<dbReference type="NCBIfam" id="TIGR03240">
    <property type="entry name" value="arg_catab_astD"/>
    <property type="match status" value="1"/>
</dbReference>
<dbReference type="NCBIfam" id="NF006992">
    <property type="entry name" value="PRK09457.1"/>
    <property type="match status" value="1"/>
</dbReference>
<dbReference type="PANTHER" id="PTHR11699">
    <property type="entry name" value="ALDEHYDE DEHYDROGENASE-RELATED"/>
    <property type="match status" value="1"/>
</dbReference>
<dbReference type="Pfam" id="PF00171">
    <property type="entry name" value="Aldedh"/>
    <property type="match status" value="1"/>
</dbReference>
<dbReference type="SUPFAM" id="SSF53720">
    <property type="entry name" value="ALDH-like"/>
    <property type="match status" value="1"/>
</dbReference>
<dbReference type="PROSITE" id="PS00070">
    <property type="entry name" value="ALDEHYDE_DEHYDR_CYS"/>
    <property type="match status" value="1"/>
</dbReference>
<dbReference type="PROSITE" id="PS00687">
    <property type="entry name" value="ALDEHYDE_DEHYDR_GLU"/>
    <property type="match status" value="1"/>
</dbReference>
<reference key="1">
    <citation type="journal article" date="2006" name="Proc. Natl. Acad. Sci. U.S.A.">
        <title>Burkholderia xenovorans LB400 harbors a multi-replicon, 9.73-Mbp genome shaped for versatility.</title>
        <authorList>
            <person name="Chain P.S.G."/>
            <person name="Denef V.J."/>
            <person name="Konstantinidis K.T."/>
            <person name="Vergez L.M."/>
            <person name="Agullo L."/>
            <person name="Reyes V.L."/>
            <person name="Hauser L."/>
            <person name="Cordova M."/>
            <person name="Gomez L."/>
            <person name="Gonzalez M."/>
            <person name="Land M."/>
            <person name="Lao V."/>
            <person name="Larimer F."/>
            <person name="LiPuma J.J."/>
            <person name="Mahenthiralingam E."/>
            <person name="Malfatti S.A."/>
            <person name="Marx C.J."/>
            <person name="Parnell J.J."/>
            <person name="Ramette A."/>
            <person name="Richardson P."/>
            <person name="Seeger M."/>
            <person name="Smith D."/>
            <person name="Spilker T."/>
            <person name="Sul W.J."/>
            <person name="Tsoi T.V."/>
            <person name="Ulrich L.E."/>
            <person name="Zhulin I.B."/>
            <person name="Tiedje J.M."/>
        </authorList>
    </citation>
    <scope>NUCLEOTIDE SEQUENCE [LARGE SCALE GENOMIC DNA]</scope>
    <source>
        <strain>LB400</strain>
    </source>
</reference>
<sequence length="487" mass="51705">MSELFIGGEWAAGTGPAFASRNPGTGAAVWEGNSASADDVDRAVRSARRAFAAWSASSVDERCAVVRRFAALVTERKEALAEAIGRETGKPLWEARTEAASMAAKVEISIQAYNERTGEKRSAMADGTAVLRHRPHGVVAVFGPYNFPGHLPNGHIVPALIAGNAVVFKPSELAPGVAALTVQIWRDAGLPAGVLNLVQGEKDTGIALANHRQIDGLFFTGSSDTGTLLHKQFGGRPEIVLALEMGGNNPLVIGPVADVDAAVHHTIQSAFLSAGQRCTCARRIFVPNDAAGDRFLERFTEVTSRITVGEYNADPQPFMGAVISVRAASRLVAAQERLLADGAKALLKMEQRDPKLGFVTPAILDVTNVANRPDEEHFGPLAQIIRYGSFNEALEQANDTEFGLSAGLLADDEALWAHFQRTIRAGIVNWNRPTNGASSGAPFGGPGRSGNHRPSAYYAADYCAFPMASVESAQLQMPASVSPGLQF</sequence>
<evidence type="ECO:0000255" key="1">
    <source>
        <dbReference type="HAMAP-Rule" id="MF_01174"/>
    </source>
</evidence>
<evidence type="ECO:0000305" key="2"/>
<protein>
    <recommendedName>
        <fullName evidence="1">N-succinylglutamate 5-semialdehyde dehydrogenase</fullName>
        <ecNumber evidence="1">1.2.1.71</ecNumber>
    </recommendedName>
    <alternativeName>
        <fullName evidence="1">Succinylglutamic semialdehyde dehydrogenase</fullName>
        <shortName evidence="1">SGSD</shortName>
    </alternativeName>
</protein>
<feature type="chain" id="PRO_0000262393" description="N-succinylglutamate 5-semialdehyde dehydrogenase">
    <location>
        <begin position="1"/>
        <end position="487"/>
    </location>
</feature>
<feature type="active site" evidence="1">
    <location>
        <position position="244"/>
    </location>
</feature>
<feature type="active site" evidence="1">
    <location>
        <position position="278"/>
    </location>
</feature>
<feature type="binding site" evidence="1">
    <location>
        <begin position="221"/>
        <end position="226"/>
    </location>
    <ligand>
        <name>NAD(+)</name>
        <dbReference type="ChEBI" id="CHEBI:57540"/>
    </ligand>
</feature>